<gene>
    <name evidence="5" type="primary">RPP4</name>
    <name evidence="6" type="synonym">CHS2</name>
    <name evidence="8" type="ordered locus">At4g16860</name>
    <name evidence="9" type="ORF">dl4460c</name>
</gene>
<sequence>MASSSSSPSSRRYDVFPSFSGVDVRKTFLSHLIEALDRRSINTFMDHGIVRSCIIADALITAIREARISIVIFSENYASSTWCLNELVEIHKCYKKGEQMVIPVFYGVDPSHVRKQIGGFGDVFKKTCEDKPEDQKQRWVKALTDISNLAGEDLRNGPTEAFMVKKIANDVSNKLFPLPKGFGDFVGIEDHIKAIKSILCLESKEARIMVGIWGQSGIGKSTIGRALFSQLSSQFHHRAFITYKSTSGSDVSGMKLSWEKELLSEILGQKDIKIDHFGVVEQRLKHKKVLILLDDVDNLEFLKTLVGKAEWFGSGSRIIVITQDKQLLKAHEIDLVYEVELPSQGLALKMISQYAFGKDSPPDDFKELAFEVAELVGSLPLGLSVLGSSLKGRDKDEWVKMMPRLRNDSDDKIEETLRVGYDRLNKKNRELFKCIACFFNGFKVSNVKELLEDDVGLTMLADKSLIRITPDGDIEMHNLLEKLGREIDRAKSKGNPAKRQFLTNFEDIQEVVTEKTGTETVLGIRVPPTVLFSTRPLLVINEESFKGMRNLQYLEIGHWSEIGLWSEIGLWSKIDLPQGLVYLPLKLKLLKWNYCPLKSLPSTFKAEYLVNLIMKYSKLEKLWEGTLPLGSLKKMDLGCSNNLKEIPDLSLAINLEELNLSKCESLVTLPSSIQNAIKLRTLYCSGVLLIDLKSLEGMCNLEYLSVDWSSMEGTQGLIYLPRKLKRLWWDYCPVKRLPSNFKAEYLVELRMENSDLEKLWDGTQPLGSLKEMYLHGSKYLKEIPDLSLAINLERLYLFGCESLVTLPSSIQNATKLINLDMRDCKKLESFPTDLNLESLEYLNLTGCPNLRNFPAIKMGCSYFEILQDRNEIEVEDCFWNKNLPAGLDYLDCLMRCMPCEFRPEYLTFLDVSGCKHEKLWEGIQSLGSLKRMDLSESENLTEIPDLSKATNLKRLYLNGCKSLVTLPSTIGNLHRLVRLEMKECTGLELLPTDVNLSSLIILDLSGCSSLRTFPLISTRIECLYLENTAIEEVPCCIEDLTRLSVLLMYCCQRLKNISPNIFRLTSLMVADFTDCRGVIKALSDATVVATMEDHVSCVPLSENIEYTCERFWDELYERNSRSIFSYKDEDGDVYWVNWDLMMMLMLI</sequence>
<accession>F4JNA9</accession>
<accession>O23527</accession>
<accession>O23528</accession>
<accession>Q8GW40</accession>
<accession>Q8L843</accession>
<accession>Q8S4Q0</accession>
<proteinExistence type="evidence at protein level"/>
<organism>
    <name type="scientific">Arabidopsis thaliana</name>
    <name type="common">Mouse-ear cress</name>
    <dbReference type="NCBI Taxonomy" id="3702"/>
    <lineage>
        <taxon>Eukaryota</taxon>
        <taxon>Viridiplantae</taxon>
        <taxon>Streptophyta</taxon>
        <taxon>Embryophyta</taxon>
        <taxon>Tracheophyta</taxon>
        <taxon>Spermatophyta</taxon>
        <taxon>Magnoliopsida</taxon>
        <taxon>eudicotyledons</taxon>
        <taxon>Gunneridae</taxon>
        <taxon>Pentapetalae</taxon>
        <taxon>rosids</taxon>
        <taxon>malvids</taxon>
        <taxon>Brassicales</taxon>
        <taxon>Brassicaceae</taxon>
        <taxon>Camelineae</taxon>
        <taxon>Arabidopsis</taxon>
    </lineage>
</organism>
<dbReference type="EC" id="3.2.2.6" evidence="2"/>
<dbReference type="EMBL" id="AF440696">
    <property type="protein sequence ID" value="AAM18462.1"/>
    <property type="status" value="ALT_SEQ"/>
    <property type="molecule type" value="Genomic_DNA"/>
</dbReference>
<dbReference type="EMBL" id="Z97342">
    <property type="protein sequence ID" value="CAB10461.1"/>
    <property type="status" value="ALT_SEQ"/>
    <property type="molecule type" value="Genomic_DNA"/>
</dbReference>
<dbReference type="EMBL" id="AL161545">
    <property type="protein sequence ID" value="CAB80957.1"/>
    <property type="status" value="ALT_SEQ"/>
    <property type="molecule type" value="Genomic_DNA"/>
</dbReference>
<dbReference type="EMBL" id="CP002687">
    <property type="protein sequence ID" value="AEE83818.1"/>
    <property type="molecule type" value="Genomic_DNA"/>
</dbReference>
<dbReference type="EMBL" id="AY120755">
    <property type="protein sequence ID" value="AAM53313.1"/>
    <property type="molecule type" value="mRNA"/>
</dbReference>
<dbReference type="EMBL" id="AK119099">
    <property type="protein sequence ID" value="BAC43672.1"/>
    <property type="status" value="ALT_INIT"/>
    <property type="molecule type" value="mRNA"/>
</dbReference>
<dbReference type="PIR" id="C71436">
    <property type="entry name" value="C71436"/>
</dbReference>
<dbReference type="RefSeq" id="NP_193420.2">
    <property type="nucleotide sequence ID" value="NM_117790.4"/>
</dbReference>
<dbReference type="SMR" id="F4JNA9"/>
<dbReference type="FunCoup" id="F4JNA9">
    <property type="interactions" value="23"/>
</dbReference>
<dbReference type="STRING" id="3702.F4JNA9"/>
<dbReference type="GlyGen" id="F4JNA9">
    <property type="glycosylation" value="1 site"/>
</dbReference>
<dbReference type="PaxDb" id="3702-AT4G16860.1"/>
<dbReference type="EnsemblPlants" id="AT4G16860.1">
    <property type="protein sequence ID" value="AT4G16860.1"/>
    <property type="gene ID" value="AT4G16860"/>
</dbReference>
<dbReference type="GeneID" id="827395"/>
<dbReference type="Gramene" id="AT4G16860.1">
    <property type="protein sequence ID" value="AT4G16860.1"/>
    <property type="gene ID" value="AT4G16860"/>
</dbReference>
<dbReference type="KEGG" id="ath:AT4G16860"/>
<dbReference type="Araport" id="AT4G16860"/>
<dbReference type="TAIR" id="AT4G16860">
    <property type="gene designation" value="RPP4"/>
</dbReference>
<dbReference type="eggNOG" id="ENOG502QQJE">
    <property type="taxonomic scope" value="Eukaryota"/>
</dbReference>
<dbReference type="HOGENOM" id="CLU_001561_0_1_1"/>
<dbReference type="InParanoid" id="F4JNA9"/>
<dbReference type="PRO" id="PR:F4JNA9"/>
<dbReference type="Proteomes" id="UP000006548">
    <property type="component" value="Chromosome 4"/>
</dbReference>
<dbReference type="ExpressionAtlas" id="F4JNA9">
    <property type="expression patterns" value="baseline and differential"/>
</dbReference>
<dbReference type="GO" id="GO:0043531">
    <property type="term" value="F:ADP binding"/>
    <property type="evidence" value="ECO:0007669"/>
    <property type="project" value="InterPro"/>
</dbReference>
<dbReference type="GO" id="GO:0005524">
    <property type="term" value="F:ATP binding"/>
    <property type="evidence" value="ECO:0007669"/>
    <property type="project" value="UniProtKB-KW"/>
</dbReference>
<dbReference type="GO" id="GO:0030275">
    <property type="term" value="F:LRR domain binding"/>
    <property type="evidence" value="ECO:0000250"/>
    <property type="project" value="TAIR"/>
</dbReference>
<dbReference type="GO" id="GO:0061809">
    <property type="term" value="F:NAD+ nucleosidase activity, cyclic ADP-ribose generating"/>
    <property type="evidence" value="ECO:0007669"/>
    <property type="project" value="UniProtKB-EC"/>
</dbReference>
<dbReference type="GO" id="GO:0006952">
    <property type="term" value="P:defense response"/>
    <property type="evidence" value="ECO:0000304"/>
    <property type="project" value="TAIR"/>
</dbReference>
<dbReference type="GO" id="GO:0050832">
    <property type="term" value="P:defense response to fungus"/>
    <property type="evidence" value="ECO:0000250"/>
    <property type="project" value="TAIR"/>
</dbReference>
<dbReference type="GO" id="GO:0007165">
    <property type="term" value="P:signal transduction"/>
    <property type="evidence" value="ECO:0007669"/>
    <property type="project" value="InterPro"/>
</dbReference>
<dbReference type="FunFam" id="1.10.8.430:FF:000002">
    <property type="entry name" value="Disease resistance protein (TIR-NBS-LRR class)"/>
    <property type="match status" value="1"/>
</dbReference>
<dbReference type="FunFam" id="3.40.50.10140:FF:000007">
    <property type="entry name" value="Disease resistance protein (TIR-NBS-LRR class)"/>
    <property type="match status" value="1"/>
</dbReference>
<dbReference type="FunFam" id="3.40.50.300:FF:001002">
    <property type="entry name" value="Disease resistance protein (TIR-NBS-LRR class)"/>
    <property type="match status" value="1"/>
</dbReference>
<dbReference type="FunFam" id="3.80.10.10:FF:000359">
    <property type="entry name" value="Disease resistance protein (TIR-NBS-LRR class) family"/>
    <property type="match status" value="2"/>
</dbReference>
<dbReference type="Gene3D" id="1.10.8.430">
    <property type="entry name" value="Helical domain of apoptotic protease-activating factors"/>
    <property type="match status" value="1"/>
</dbReference>
<dbReference type="Gene3D" id="3.40.50.300">
    <property type="entry name" value="P-loop containing nucleotide triphosphate hydrolases"/>
    <property type="match status" value="1"/>
</dbReference>
<dbReference type="Gene3D" id="3.80.10.10">
    <property type="entry name" value="Ribonuclease Inhibitor"/>
    <property type="match status" value="3"/>
</dbReference>
<dbReference type="Gene3D" id="3.40.50.10140">
    <property type="entry name" value="Toll/interleukin-1 receptor homology (TIR) domain"/>
    <property type="match status" value="1"/>
</dbReference>
<dbReference type="InterPro" id="IPR042197">
    <property type="entry name" value="Apaf_helical"/>
</dbReference>
<dbReference type="InterPro" id="IPR044974">
    <property type="entry name" value="Disease_R_plants"/>
</dbReference>
<dbReference type="InterPro" id="IPR011713">
    <property type="entry name" value="Leu-rich_rpt_3"/>
</dbReference>
<dbReference type="InterPro" id="IPR032675">
    <property type="entry name" value="LRR_dom_sf"/>
</dbReference>
<dbReference type="InterPro" id="IPR002182">
    <property type="entry name" value="NB-ARC"/>
</dbReference>
<dbReference type="InterPro" id="IPR027417">
    <property type="entry name" value="P-loop_NTPase"/>
</dbReference>
<dbReference type="InterPro" id="IPR000157">
    <property type="entry name" value="TIR_dom"/>
</dbReference>
<dbReference type="InterPro" id="IPR035897">
    <property type="entry name" value="Toll_tir_struct_dom_sf"/>
</dbReference>
<dbReference type="InterPro" id="IPR036390">
    <property type="entry name" value="WH_DNA-bd_sf"/>
</dbReference>
<dbReference type="PANTHER" id="PTHR11017:SF274">
    <property type="entry name" value="ADP-RIBOSYL CYCLASE_CYCLIC ADP-RIBOSE HYDROLASE-RELATED"/>
    <property type="match status" value="1"/>
</dbReference>
<dbReference type="PANTHER" id="PTHR11017">
    <property type="entry name" value="LEUCINE-RICH REPEAT-CONTAINING PROTEIN"/>
    <property type="match status" value="1"/>
</dbReference>
<dbReference type="Pfam" id="PF07725">
    <property type="entry name" value="LRR_3"/>
    <property type="match status" value="2"/>
</dbReference>
<dbReference type="Pfam" id="PF00931">
    <property type="entry name" value="NB-ARC"/>
    <property type="match status" value="1"/>
</dbReference>
<dbReference type="Pfam" id="PF01582">
    <property type="entry name" value="TIR"/>
    <property type="match status" value="1"/>
</dbReference>
<dbReference type="Pfam" id="PF23282">
    <property type="entry name" value="WHD_ROQ1"/>
    <property type="match status" value="1"/>
</dbReference>
<dbReference type="PRINTS" id="PR00364">
    <property type="entry name" value="DISEASERSIST"/>
</dbReference>
<dbReference type="SMART" id="SM00255">
    <property type="entry name" value="TIR"/>
    <property type="match status" value="1"/>
</dbReference>
<dbReference type="SUPFAM" id="SSF52058">
    <property type="entry name" value="L domain-like"/>
    <property type="match status" value="2"/>
</dbReference>
<dbReference type="SUPFAM" id="SSF52540">
    <property type="entry name" value="P-loop containing nucleoside triphosphate hydrolases"/>
    <property type="match status" value="1"/>
</dbReference>
<dbReference type="SUPFAM" id="SSF52200">
    <property type="entry name" value="Toll/Interleukin receptor TIR domain"/>
    <property type="match status" value="1"/>
</dbReference>
<dbReference type="SUPFAM" id="SSF46785">
    <property type="entry name" value="Winged helix' DNA-binding domain"/>
    <property type="match status" value="1"/>
</dbReference>
<dbReference type="PROSITE" id="PS50104">
    <property type="entry name" value="TIR"/>
    <property type="match status" value="1"/>
</dbReference>
<name>RPP4_ARATH</name>
<evidence type="ECO:0000255" key="1"/>
<evidence type="ECO:0000255" key="2">
    <source>
        <dbReference type="PROSITE-ProRule" id="PRU00204"/>
    </source>
</evidence>
<evidence type="ECO:0000269" key="3">
    <source>
    </source>
</evidence>
<evidence type="ECO:0000269" key="4">
    <source>
    </source>
</evidence>
<evidence type="ECO:0000303" key="5">
    <source>
    </source>
</evidence>
<evidence type="ECO:0000303" key="6">
    <source>
    </source>
</evidence>
<evidence type="ECO:0000305" key="7"/>
<evidence type="ECO:0000312" key="8">
    <source>
        <dbReference type="Araport" id="AT4G16860"/>
    </source>
</evidence>
<evidence type="ECO:0000312" key="9">
    <source>
        <dbReference type="EMBL" id="CAB10461.1"/>
    </source>
</evidence>
<keyword id="KW-0067">ATP-binding</keyword>
<keyword id="KW-0378">Hydrolase</keyword>
<keyword id="KW-0433">Leucine-rich repeat</keyword>
<keyword id="KW-0520">NAD</keyword>
<keyword id="KW-0547">Nucleotide-binding</keyword>
<keyword id="KW-0611">Plant defense</keyword>
<keyword id="KW-1185">Reference proteome</keyword>
<keyword id="KW-0677">Repeat</keyword>
<comment type="function">
    <text evidence="3 4">TIR-NB-LRR receptor-like protein that confers resistance to the pathogen Hyaloperonospora arabidopsis isolates Emoy2 and Emwa1 (downy mildew disease) (PubMed:11846877). Plays a role in the regulation of temperature response during plant growth and survival (PubMed:20699401).</text>
</comment>
<comment type="catalytic activity">
    <reaction evidence="2">
        <text>NAD(+) + H2O = ADP-D-ribose + nicotinamide + H(+)</text>
        <dbReference type="Rhea" id="RHEA:16301"/>
        <dbReference type="ChEBI" id="CHEBI:15377"/>
        <dbReference type="ChEBI" id="CHEBI:15378"/>
        <dbReference type="ChEBI" id="CHEBI:17154"/>
        <dbReference type="ChEBI" id="CHEBI:57540"/>
        <dbReference type="ChEBI" id="CHEBI:57967"/>
        <dbReference type="EC" id="3.2.2.6"/>
    </reaction>
    <physiologicalReaction direction="left-to-right" evidence="2">
        <dbReference type="Rhea" id="RHEA:16302"/>
    </physiologicalReaction>
</comment>
<comment type="subunit">
    <text evidence="3">Interacts with RSH1.</text>
</comment>
<comment type="domain">
    <text evidence="2">The TIR domain mediates NAD(+) hydrolase (NADase) activity. Self-association of TIR domains is required for NADase activity.</text>
</comment>
<comment type="sequence caution" evidence="7">
    <conflict type="erroneous gene model prediction">
        <sequence resource="EMBL-CDS" id="AAM18462"/>
    </conflict>
</comment>
<comment type="sequence caution" evidence="7">
    <conflict type="erroneous initiation">
        <sequence resource="EMBL-CDS" id="BAC43672"/>
    </conflict>
    <text>Truncated N-terminus.</text>
</comment>
<comment type="sequence caution" evidence="7">
    <conflict type="erroneous gene model prediction">
        <sequence resource="EMBL-CDS" id="CAB10461"/>
    </conflict>
</comment>
<comment type="sequence caution" evidence="7">
    <conflict type="erroneous gene model prediction">
        <sequence resource="EMBL-CDS" id="CAB80957"/>
    </conflict>
</comment>
<protein>
    <recommendedName>
        <fullName evidence="7">Disease resistance protein RPP4</fullName>
        <ecNumber evidence="2">3.2.2.6</ecNumber>
    </recommendedName>
    <alternativeName>
        <fullName evidence="6">Protein CHILLING-SENSITIVE 2</fullName>
    </alternativeName>
    <alternativeName>
        <fullName evidence="5">Protein RECOGNITION OF PERONOSPORA PARASITICA 4</fullName>
    </alternativeName>
</protein>
<feature type="chain" id="PRO_0000433379" description="Disease resistance protein RPP4">
    <location>
        <begin position="1"/>
        <end position="1147"/>
    </location>
</feature>
<feature type="domain" description="TIR" evidence="2">
    <location>
        <begin position="11"/>
        <end position="175"/>
    </location>
</feature>
<feature type="domain" description="NB-ARC" evidence="1">
    <location>
        <begin position="189"/>
        <end position="446"/>
    </location>
</feature>
<feature type="repeat" description="LRR 1" evidence="1">
    <location>
        <begin position="548"/>
        <end position="573"/>
    </location>
</feature>
<feature type="repeat" description="LRR 2" evidence="1">
    <location>
        <begin position="584"/>
        <end position="606"/>
    </location>
</feature>
<feature type="repeat" description="LRR 3" evidence="1">
    <location>
        <begin position="608"/>
        <end position="629"/>
    </location>
</feature>
<feature type="repeat" description="LRR 4" evidence="1">
    <location>
        <begin position="630"/>
        <end position="653"/>
    </location>
</feature>
<feature type="repeat" description="LRR 5" evidence="1">
    <location>
        <begin position="655"/>
        <end position="676"/>
    </location>
</feature>
<feature type="repeat" description="LRR 6" evidence="1">
    <location>
        <begin position="698"/>
        <end position="721"/>
    </location>
</feature>
<feature type="repeat" description="LRR 7" evidence="1">
    <location>
        <begin position="722"/>
        <end position="743"/>
    </location>
</feature>
<feature type="repeat" description="LRR 8" evidence="1">
    <location>
        <begin position="744"/>
        <end position="766"/>
    </location>
</feature>
<feature type="repeat" description="LRR 9" evidence="1">
    <location>
        <begin position="767"/>
        <end position="790"/>
    </location>
</feature>
<feature type="repeat" description="LRR 10" evidence="1">
    <location>
        <begin position="792"/>
        <end position="813"/>
    </location>
</feature>
<feature type="repeat" description="LRR 11" evidence="1">
    <location>
        <begin position="814"/>
        <end position="836"/>
    </location>
</feature>
<feature type="repeat" description="LRR 12" evidence="1">
    <location>
        <begin position="837"/>
        <end position="860"/>
    </location>
</feature>
<feature type="repeat" description="LRR 13" evidence="1">
    <location>
        <begin position="926"/>
        <end position="950"/>
    </location>
</feature>
<feature type="repeat" description="LRR 14" evidence="1">
    <location>
        <begin position="952"/>
        <end position="973"/>
    </location>
</feature>
<feature type="repeat" description="LRR 15" evidence="1">
    <location>
        <begin position="974"/>
        <end position="996"/>
    </location>
</feature>
<feature type="repeat" description="LRR 16" evidence="1">
    <location>
        <begin position="997"/>
        <end position="1017"/>
    </location>
</feature>
<feature type="repeat" description="LRR 17" evidence="1">
    <location>
        <begin position="1018"/>
        <end position="1042"/>
    </location>
</feature>
<feature type="repeat" description="LRR 18" evidence="1">
    <location>
        <begin position="1044"/>
        <end position="1064"/>
    </location>
</feature>
<feature type="active site" evidence="2">
    <location>
        <position position="86"/>
    </location>
</feature>
<feature type="mutagenesis site" description="In the gain-of-function mutants chs2-1 and chs2-2; seedling lethality when grown at temperatures below 12 degrees Celsius. Dwarf plants with chlorotic leaves when grown between 16 and 18 degrees Celsius. No visible phenotype when grown at 22 degrees Celsius." evidence="4">
    <original>S</original>
    <variation>F</variation>
    <location>
        <position position="389"/>
    </location>
</feature>
<feature type="sequence conflict" description="In Ref. 5; AAM53313." evidence="7" ref="5">
    <original>G</original>
    <variation>D</variation>
    <location>
        <position position="713"/>
    </location>
</feature>
<reference key="1">
    <citation type="journal article" date="2002" name="Plant J.">
        <title>Arabidopsis RPP4 is a member of the RPP5 multigene family of TIR-NB-LRR genes and confers downy mildew resistance through multiple signalling components.</title>
        <authorList>
            <person name="van der Biezen E.A."/>
            <person name="Freddie C.T."/>
            <person name="Kahn K."/>
            <person name="Parker J.E."/>
            <person name="Jones J.D."/>
        </authorList>
    </citation>
    <scope>NUCLEOTIDE SEQUENCE [GENOMIC DNA]</scope>
    <scope>FUNCTION</scope>
    <scope>INTERACTION WITH RSH1</scope>
</reference>
<reference key="2">
    <citation type="journal article" date="1998" name="Nature">
        <title>Analysis of 1.9 Mb of contiguous sequence from chromosome 4 of Arabidopsis thaliana.</title>
        <authorList>
            <person name="Bevan M."/>
            <person name="Bancroft I."/>
            <person name="Bent E."/>
            <person name="Love K."/>
            <person name="Goodman H.M."/>
            <person name="Dean C."/>
            <person name="Bergkamp R."/>
            <person name="Dirkse W."/>
            <person name="van Staveren M."/>
            <person name="Stiekema W."/>
            <person name="Drost L."/>
            <person name="Ridley P."/>
            <person name="Hudson S.-A."/>
            <person name="Patel K."/>
            <person name="Murphy G."/>
            <person name="Piffanelli P."/>
            <person name="Wedler H."/>
            <person name="Wedler E."/>
            <person name="Wambutt R."/>
            <person name="Weitzenegger T."/>
            <person name="Pohl T."/>
            <person name="Terryn N."/>
            <person name="Gielen J."/>
            <person name="Villarroel R."/>
            <person name="De Clercq R."/>
            <person name="van Montagu M."/>
            <person name="Lecharny A."/>
            <person name="Aubourg S."/>
            <person name="Gy I."/>
            <person name="Kreis M."/>
            <person name="Lao N."/>
            <person name="Kavanagh T."/>
            <person name="Hempel S."/>
            <person name="Kotter P."/>
            <person name="Entian K.-D."/>
            <person name="Rieger M."/>
            <person name="Schaefer M."/>
            <person name="Funk B."/>
            <person name="Mueller-Auer S."/>
            <person name="Silvey M."/>
            <person name="James R."/>
            <person name="Monfort A."/>
            <person name="Pons A."/>
            <person name="Puigdomenech P."/>
            <person name="Douka A."/>
            <person name="Voukelatou E."/>
            <person name="Milioni D."/>
            <person name="Hatzopoulos P."/>
            <person name="Piravandi E."/>
            <person name="Obermaier B."/>
            <person name="Hilbert H."/>
            <person name="Duesterhoeft A."/>
            <person name="Moores T."/>
            <person name="Jones J.D.G."/>
            <person name="Eneva T."/>
            <person name="Palme K."/>
            <person name="Benes V."/>
            <person name="Rechmann S."/>
            <person name="Ansorge W."/>
            <person name="Cooke R."/>
            <person name="Berger C."/>
            <person name="Delseny M."/>
            <person name="Voet M."/>
            <person name="Volckaert G."/>
            <person name="Mewes H.-W."/>
            <person name="Klosterman S."/>
            <person name="Schueller C."/>
            <person name="Chalwatzis N."/>
        </authorList>
    </citation>
    <scope>NUCLEOTIDE SEQUENCE [LARGE SCALE GENOMIC DNA]</scope>
    <source>
        <strain>cv. Columbia</strain>
    </source>
</reference>
<reference key="3">
    <citation type="journal article" date="1999" name="Nature">
        <title>Sequence and analysis of chromosome 4 of the plant Arabidopsis thaliana.</title>
        <authorList>
            <person name="Mayer K.F.X."/>
            <person name="Schueller C."/>
            <person name="Wambutt R."/>
            <person name="Murphy G."/>
            <person name="Volckaert G."/>
            <person name="Pohl T."/>
            <person name="Duesterhoeft A."/>
            <person name="Stiekema W."/>
            <person name="Entian K.-D."/>
            <person name="Terryn N."/>
            <person name="Harris B."/>
            <person name="Ansorge W."/>
            <person name="Brandt P."/>
            <person name="Grivell L.A."/>
            <person name="Rieger M."/>
            <person name="Weichselgartner M."/>
            <person name="de Simone V."/>
            <person name="Obermaier B."/>
            <person name="Mache R."/>
            <person name="Mueller M."/>
            <person name="Kreis M."/>
            <person name="Delseny M."/>
            <person name="Puigdomenech P."/>
            <person name="Watson M."/>
            <person name="Schmidtheini T."/>
            <person name="Reichert B."/>
            <person name="Portetelle D."/>
            <person name="Perez-Alonso M."/>
            <person name="Boutry M."/>
            <person name="Bancroft I."/>
            <person name="Vos P."/>
            <person name="Hoheisel J."/>
            <person name="Zimmermann W."/>
            <person name="Wedler H."/>
            <person name="Ridley P."/>
            <person name="Langham S.-A."/>
            <person name="McCullagh B."/>
            <person name="Bilham L."/>
            <person name="Robben J."/>
            <person name="van der Schueren J."/>
            <person name="Grymonprez B."/>
            <person name="Chuang Y.-J."/>
            <person name="Vandenbussche F."/>
            <person name="Braeken M."/>
            <person name="Weltjens I."/>
            <person name="Voet M."/>
            <person name="Bastiaens I."/>
            <person name="Aert R."/>
            <person name="Defoor E."/>
            <person name="Weitzenegger T."/>
            <person name="Bothe G."/>
            <person name="Ramsperger U."/>
            <person name="Hilbert H."/>
            <person name="Braun M."/>
            <person name="Holzer E."/>
            <person name="Brandt A."/>
            <person name="Peters S."/>
            <person name="van Staveren M."/>
            <person name="Dirkse W."/>
            <person name="Mooijman P."/>
            <person name="Klein Lankhorst R."/>
            <person name="Rose M."/>
            <person name="Hauf J."/>
            <person name="Koetter P."/>
            <person name="Berneiser S."/>
            <person name="Hempel S."/>
            <person name="Feldpausch M."/>
            <person name="Lamberth S."/>
            <person name="Van den Daele H."/>
            <person name="De Keyser A."/>
            <person name="Buysshaert C."/>
            <person name="Gielen J."/>
            <person name="Villarroel R."/>
            <person name="De Clercq R."/>
            <person name="van Montagu M."/>
            <person name="Rogers J."/>
            <person name="Cronin A."/>
            <person name="Quail M.A."/>
            <person name="Bray-Allen S."/>
            <person name="Clark L."/>
            <person name="Doggett J."/>
            <person name="Hall S."/>
            <person name="Kay M."/>
            <person name="Lennard N."/>
            <person name="McLay K."/>
            <person name="Mayes R."/>
            <person name="Pettett A."/>
            <person name="Rajandream M.A."/>
            <person name="Lyne M."/>
            <person name="Benes V."/>
            <person name="Rechmann S."/>
            <person name="Borkova D."/>
            <person name="Bloecker H."/>
            <person name="Scharfe M."/>
            <person name="Grimm M."/>
            <person name="Loehnert T.-H."/>
            <person name="Dose S."/>
            <person name="de Haan M."/>
            <person name="Maarse A.C."/>
            <person name="Schaefer M."/>
            <person name="Mueller-Auer S."/>
            <person name="Gabel C."/>
            <person name="Fuchs M."/>
            <person name="Fartmann B."/>
            <person name="Granderath K."/>
            <person name="Dauner D."/>
            <person name="Herzl A."/>
            <person name="Neumann S."/>
            <person name="Argiriou A."/>
            <person name="Vitale D."/>
            <person name="Liguori R."/>
            <person name="Piravandi E."/>
            <person name="Massenet O."/>
            <person name="Quigley F."/>
            <person name="Clabauld G."/>
            <person name="Muendlein A."/>
            <person name="Felber R."/>
            <person name="Schnabl S."/>
            <person name="Hiller R."/>
            <person name="Schmidt W."/>
            <person name="Lecharny A."/>
            <person name="Aubourg S."/>
            <person name="Chefdor F."/>
            <person name="Cooke R."/>
            <person name="Berger C."/>
            <person name="Monfort A."/>
            <person name="Casacuberta E."/>
            <person name="Gibbons T."/>
            <person name="Weber N."/>
            <person name="Vandenbol M."/>
            <person name="Bargues M."/>
            <person name="Terol J."/>
            <person name="Torres A."/>
            <person name="Perez-Perez A."/>
            <person name="Purnelle B."/>
            <person name="Bent E."/>
            <person name="Johnson S."/>
            <person name="Tacon D."/>
            <person name="Jesse T."/>
            <person name="Heijnen L."/>
            <person name="Schwarz S."/>
            <person name="Scholler P."/>
            <person name="Heber S."/>
            <person name="Francs P."/>
            <person name="Bielke C."/>
            <person name="Frishman D."/>
            <person name="Haase D."/>
            <person name="Lemcke K."/>
            <person name="Mewes H.-W."/>
            <person name="Stocker S."/>
            <person name="Zaccaria P."/>
            <person name="Bevan M."/>
            <person name="Wilson R.K."/>
            <person name="de la Bastide M."/>
            <person name="Habermann K."/>
            <person name="Parnell L."/>
            <person name="Dedhia N."/>
            <person name="Gnoj L."/>
            <person name="Schutz K."/>
            <person name="Huang E."/>
            <person name="Spiegel L."/>
            <person name="Sekhon M."/>
            <person name="Murray J."/>
            <person name="Sheet P."/>
            <person name="Cordes M."/>
            <person name="Abu-Threideh J."/>
            <person name="Stoneking T."/>
            <person name="Kalicki J."/>
            <person name="Graves T."/>
            <person name="Harmon G."/>
            <person name="Edwards J."/>
            <person name="Latreille P."/>
            <person name="Courtney L."/>
            <person name="Cloud J."/>
            <person name="Abbott A."/>
            <person name="Scott K."/>
            <person name="Johnson D."/>
            <person name="Minx P."/>
            <person name="Bentley D."/>
            <person name="Fulton B."/>
            <person name="Miller N."/>
            <person name="Greco T."/>
            <person name="Kemp K."/>
            <person name="Kramer J."/>
            <person name="Fulton L."/>
            <person name="Mardis E."/>
            <person name="Dante M."/>
            <person name="Pepin K."/>
            <person name="Hillier L.W."/>
            <person name="Nelson J."/>
            <person name="Spieth J."/>
            <person name="Ryan E."/>
            <person name="Andrews S."/>
            <person name="Geisel C."/>
            <person name="Layman D."/>
            <person name="Du H."/>
            <person name="Ali J."/>
            <person name="Berghoff A."/>
            <person name="Jones K."/>
            <person name="Drone K."/>
            <person name="Cotton M."/>
            <person name="Joshu C."/>
            <person name="Antonoiu B."/>
            <person name="Zidanic M."/>
            <person name="Strong C."/>
            <person name="Sun H."/>
            <person name="Lamar B."/>
            <person name="Yordan C."/>
            <person name="Ma P."/>
            <person name="Zhong J."/>
            <person name="Preston R."/>
            <person name="Vil D."/>
            <person name="Shekher M."/>
            <person name="Matero A."/>
            <person name="Shah R."/>
            <person name="Swaby I.K."/>
            <person name="O'Shaughnessy A."/>
            <person name="Rodriguez M."/>
            <person name="Hoffman J."/>
            <person name="Till S."/>
            <person name="Granat S."/>
            <person name="Shohdy N."/>
            <person name="Hasegawa A."/>
            <person name="Hameed A."/>
            <person name="Lodhi M."/>
            <person name="Johnson A."/>
            <person name="Chen E."/>
            <person name="Marra M.A."/>
            <person name="Martienssen R."/>
            <person name="McCombie W.R."/>
        </authorList>
    </citation>
    <scope>NUCLEOTIDE SEQUENCE [LARGE SCALE GENOMIC DNA]</scope>
    <source>
        <strain>cv. Columbia</strain>
    </source>
</reference>
<reference key="4">
    <citation type="journal article" date="2017" name="Plant J.">
        <title>Araport11: a complete reannotation of the Arabidopsis thaliana reference genome.</title>
        <authorList>
            <person name="Cheng C.Y."/>
            <person name="Krishnakumar V."/>
            <person name="Chan A.P."/>
            <person name="Thibaud-Nissen F."/>
            <person name="Schobel S."/>
            <person name="Town C.D."/>
        </authorList>
    </citation>
    <scope>GENOME REANNOTATION</scope>
    <source>
        <strain>cv. Columbia</strain>
    </source>
</reference>
<reference key="5">
    <citation type="journal article" date="2003" name="Science">
        <title>Empirical analysis of transcriptional activity in the Arabidopsis genome.</title>
        <authorList>
            <person name="Yamada K."/>
            <person name="Lim J."/>
            <person name="Dale J.M."/>
            <person name="Chen H."/>
            <person name="Shinn P."/>
            <person name="Palm C.J."/>
            <person name="Southwick A.M."/>
            <person name="Wu H.C."/>
            <person name="Kim C.J."/>
            <person name="Nguyen M."/>
            <person name="Pham P.K."/>
            <person name="Cheuk R.F."/>
            <person name="Karlin-Newmann G."/>
            <person name="Liu S.X."/>
            <person name="Lam B."/>
            <person name="Sakano H."/>
            <person name="Wu T."/>
            <person name="Yu G."/>
            <person name="Miranda M."/>
            <person name="Quach H.L."/>
            <person name="Tripp M."/>
            <person name="Chang C.H."/>
            <person name="Lee J.M."/>
            <person name="Toriumi M.J."/>
            <person name="Chan M.M."/>
            <person name="Tang C.C."/>
            <person name="Onodera C.S."/>
            <person name="Deng J.M."/>
            <person name="Akiyama K."/>
            <person name="Ansari Y."/>
            <person name="Arakawa T."/>
            <person name="Banh J."/>
            <person name="Banno F."/>
            <person name="Bowser L."/>
            <person name="Brooks S.Y."/>
            <person name="Carninci P."/>
            <person name="Chao Q."/>
            <person name="Choy N."/>
            <person name="Enju A."/>
            <person name="Goldsmith A.D."/>
            <person name="Gurjal M."/>
            <person name="Hansen N.F."/>
            <person name="Hayashizaki Y."/>
            <person name="Johnson-Hopson C."/>
            <person name="Hsuan V.W."/>
            <person name="Iida K."/>
            <person name="Karnes M."/>
            <person name="Khan S."/>
            <person name="Koesema E."/>
            <person name="Ishida J."/>
            <person name="Jiang P.X."/>
            <person name="Jones T."/>
            <person name="Kawai J."/>
            <person name="Kamiya A."/>
            <person name="Meyers C."/>
            <person name="Nakajima M."/>
            <person name="Narusaka M."/>
            <person name="Seki M."/>
            <person name="Sakurai T."/>
            <person name="Satou M."/>
            <person name="Tamse R."/>
            <person name="Vaysberg M."/>
            <person name="Wallender E.K."/>
            <person name="Wong C."/>
            <person name="Yamamura Y."/>
            <person name="Yuan S."/>
            <person name="Shinozaki K."/>
            <person name="Davis R.W."/>
            <person name="Theologis A."/>
            <person name="Ecker J.R."/>
        </authorList>
    </citation>
    <scope>NUCLEOTIDE SEQUENCE [LARGE SCALE MRNA]</scope>
    <source>
        <strain>cv. Columbia</strain>
    </source>
</reference>
<reference key="6">
    <citation type="journal article" date="2002" name="Science">
        <title>Functional annotation of a full-length Arabidopsis cDNA collection.</title>
        <authorList>
            <person name="Seki M."/>
            <person name="Narusaka M."/>
            <person name="Kamiya A."/>
            <person name="Ishida J."/>
            <person name="Satou M."/>
            <person name="Sakurai T."/>
            <person name="Nakajima M."/>
            <person name="Enju A."/>
            <person name="Akiyama K."/>
            <person name="Oono Y."/>
            <person name="Muramatsu M."/>
            <person name="Hayashizaki Y."/>
            <person name="Kawai J."/>
            <person name="Carninci P."/>
            <person name="Itoh M."/>
            <person name="Ishii Y."/>
            <person name="Arakawa T."/>
            <person name="Shibata K."/>
            <person name="Shinagawa A."/>
            <person name="Shinozaki K."/>
        </authorList>
    </citation>
    <scope>NUCLEOTIDE SEQUENCE [LARGE SCALE MRNA] OF 1-157</scope>
    <source>
        <strain>cv. Columbia</strain>
    </source>
</reference>
<reference key="7">
    <citation type="journal article" date="2010" name="Plant Physiol.">
        <title>A gain-of-function mutation in the Arabidopsis disease resistance gene RPP4 confers sensitivity to low temperature.</title>
        <authorList>
            <person name="Huang X."/>
            <person name="Li J."/>
            <person name="Bao F."/>
            <person name="Zhang X."/>
            <person name="Yang S."/>
        </authorList>
    </citation>
    <scope>FUNCTION</scope>
    <scope>MUTAGENESIS OF SER-389</scope>
</reference>